<sequence length="515" mass="59435">MVSIPEYYEGKNILLTGATGFLGKVLLEKLLRSCPRVNSVYVLVRQKAGQTPQERVEEILSSKLFDRLRDENPDFREKIIAINSELTQPKLALSEEDKEIIIDSTNVIFHCAATVRFNENLRDAVQLNVIATRQLILLAQQMKNLEVFMHVSTAYAYCNRKHIDEVVYPPPVDPKKLIDSLEWMDDGLVNDITPKLIGDRPNTYIYTKALAEYVVQQEGAKLNVAIVRPSIVGASWKEPFPGWIDNFNGPSGLFIAAGKGILRTMRASNNALADLVPVDVVVNTSLAAAWYSGVNRPRNIMVYNCTTGSTNPFHWGEVEYHVISTFKRNPLEQAFRRPNVNLTSNHLLYHYWIAVSHKAPAFLYDIYLRMTGRSPRMMKTITRLHKAMVFLEYFTSNSWVWNTDNVNMLMNQLNPEDKKTFNIDVRQLHWAEYIENYCMGTKKYVLNEEMSGLPAARKHLNKLRNIRYGFNTILVILIWRIFIARSQMARNIWYFVVSLCYKFLSYFRASSTMRY</sequence>
<dbReference type="EC" id="1.2.1.84" evidence="3"/>
<dbReference type="EMBL" id="AK005531">
    <property type="protein sequence ID" value="BAB24102.1"/>
    <property type="molecule type" value="mRNA"/>
</dbReference>
<dbReference type="EMBL" id="AK011187">
    <property type="protein sequence ID" value="BAB27453.1"/>
    <property type="molecule type" value="mRNA"/>
</dbReference>
<dbReference type="EMBL" id="AK014486">
    <property type="protein sequence ID" value="BAB29388.1"/>
    <property type="molecule type" value="mRNA"/>
</dbReference>
<dbReference type="EMBL" id="AK033674">
    <property type="protein sequence ID" value="BAC28423.1"/>
    <property type="molecule type" value="mRNA"/>
</dbReference>
<dbReference type="EMBL" id="AK030067">
    <property type="protein sequence ID" value="BAC26766.1"/>
    <property type="molecule type" value="mRNA"/>
</dbReference>
<dbReference type="EMBL" id="BC007178">
    <property type="protein sequence ID" value="AAH07178.1"/>
    <property type="molecule type" value="mRNA"/>
</dbReference>
<dbReference type="CCDS" id="CCDS40093.1">
    <molecule id="Q922J9-1"/>
</dbReference>
<dbReference type="CCDS" id="CCDS72024.1">
    <molecule id="Q922J9-3"/>
</dbReference>
<dbReference type="RefSeq" id="NP_001272760.1">
    <molecule id="Q922J9-3"/>
    <property type="nucleotide sequence ID" value="NM_001285831.2"/>
</dbReference>
<dbReference type="RefSeq" id="NP_001347597.1">
    <molecule id="Q922J9-1"/>
    <property type="nucleotide sequence ID" value="NM_001360668.1"/>
</dbReference>
<dbReference type="RefSeq" id="NP_001347598.1">
    <molecule id="Q922J9-1"/>
    <property type="nucleotide sequence ID" value="NM_001360669.1"/>
</dbReference>
<dbReference type="RefSeq" id="NP_081655.2">
    <molecule id="Q922J9-1"/>
    <property type="nucleotide sequence ID" value="NM_027379.4"/>
</dbReference>
<dbReference type="RefSeq" id="XP_006508190.1">
    <property type="nucleotide sequence ID" value="XM_006508127.3"/>
</dbReference>
<dbReference type="RefSeq" id="XP_006508191.1">
    <property type="nucleotide sequence ID" value="XM_006508128.3"/>
</dbReference>
<dbReference type="RefSeq" id="XP_006508192.1">
    <molecule id="Q922J9-1"/>
    <property type="nucleotide sequence ID" value="XM_006508129.4"/>
</dbReference>
<dbReference type="RefSeq" id="XP_006508193.1">
    <molecule id="Q922J9-1"/>
    <property type="nucleotide sequence ID" value="XM_006508130.4"/>
</dbReference>
<dbReference type="RefSeq" id="XP_006508194.1">
    <molecule id="Q922J9-1"/>
    <property type="nucleotide sequence ID" value="XM_006508131.4"/>
</dbReference>
<dbReference type="RefSeq" id="XP_030098792.1">
    <molecule id="Q922J9-3"/>
    <property type="nucleotide sequence ID" value="XM_030242932.2"/>
</dbReference>
<dbReference type="SMR" id="Q922J9"/>
<dbReference type="BioGRID" id="212175">
    <property type="interactions" value="12"/>
</dbReference>
<dbReference type="FunCoup" id="Q922J9">
    <property type="interactions" value="1789"/>
</dbReference>
<dbReference type="IntAct" id="Q922J9">
    <property type="interactions" value="2"/>
</dbReference>
<dbReference type="MINT" id="Q922J9"/>
<dbReference type="STRING" id="10090.ENSMUSP00000033018"/>
<dbReference type="SwissLipids" id="SLP:000000210"/>
<dbReference type="iPTMnet" id="Q922J9"/>
<dbReference type="PhosphoSitePlus" id="Q922J9"/>
<dbReference type="SwissPalm" id="Q922J9"/>
<dbReference type="jPOST" id="Q922J9"/>
<dbReference type="PaxDb" id="10090-ENSMUSP00000064334"/>
<dbReference type="PeptideAtlas" id="Q922J9"/>
<dbReference type="ProteomicsDB" id="271853">
    <molecule id="Q922J9-1"/>
</dbReference>
<dbReference type="ProteomicsDB" id="271854">
    <molecule id="Q922J9-2"/>
</dbReference>
<dbReference type="ProteomicsDB" id="271855">
    <molecule id="Q922J9-3"/>
</dbReference>
<dbReference type="ProteomicsDB" id="271856">
    <molecule id="Q922J9-4"/>
</dbReference>
<dbReference type="Pumba" id="Q922J9"/>
<dbReference type="Antibodypedia" id="2735">
    <property type="antibodies" value="37 antibodies from 17 providers"/>
</dbReference>
<dbReference type="DNASU" id="67420"/>
<dbReference type="Ensembl" id="ENSMUST00000033018.15">
    <molecule id="Q922J9-1"/>
    <property type="protein sequence ID" value="ENSMUSP00000033018.9"/>
    <property type="gene ID" value="ENSMUSG00000030759.17"/>
</dbReference>
<dbReference type="Ensembl" id="ENSMUST00000067929.15">
    <molecule id="Q922J9-3"/>
    <property type="protein sequence ID" value="ENSMUSP00000064334.9"/>
    <property type="gene ID" value="ENSMUSG00000030759.17"/>
</dbReference>
<dbReference type="Ensembl" id="ENSMUST00000164745.8">
    <molecule id="Q922J9-1"/>
    <property type="protein sequence ID" value="ENSMUSP00000128695.2"/>
    <property type="gene ID" value="ENSMUSG00000030759.17"/>
</dbReference>
<dbReference type="GeneID" id="67420"/>
<dbReference type="KEGG" id="mmu:67420"/>
<dbReference type="UCSC" id="uc009jhn.2">
    <molecule id="Q922J9-2"/>
    <property type="organism name" value="mouse"/>
</dbReference>
<dbReference type="UCSC" id="uc009jho.2">
    <molecule id="Q922J9-1"/>
    <property type="organism name" value="mouse"/>
</dbReference>
<dbReference type="UCSC" id="uc009jhq.2">
    <molecule id="Q922J9-3"/>
    <property type="organism name" value="mouse"/>
</dbReference>
<dbReference type="AGR" id="MGI:1914670"/>
<dbReference type="CTD" id="84188"/>
<dbReference type="MGI" id="MGI:1914670">
    <property type="gene designation" value="Far1"/>
</dbReference>
<dbReference type="VEuPathDB" id="HostDB:ENSMUSG00000030759"/>
<dbReference type="eggNOG" id="KOG1221">
    <property type="taxonomic scope" value="Eukaryota"/>
</dbReference>
<dbReference type="GeneTree" id="ENSGT00390000006367"/>
<dbReference type="HOGENOM" id="CLU_024661_0_2_1"/>
<dbReference type="InParanoid" id="Q922J9"/>
<dbReference type="OMA" id="NLMLHYW"/>
<dbReference type="OrthoDB" id="429813at2759"/>
<dbReference type="PhylomeDB" id="Q922J9"/>
<dbReference type="TreeFam" id="TF313011"/>
<dbReference type="BRENDA" id="1.2.1.84">
    <property type="organism ID" value="3474"/>
</dbReference>
<dbReference type="Reactome" id="R-MMU-9640463">
    <property type="pathway name" value="Wax biosynthesis"/>
</dbReference>
<dbReference type="BioGRID-ORCS" id="67420">
    <property type="hits" value="6 hits in 79 CRISPR screens"/>
</dbReference>
<dbReference type="ChiTaRS" id="Far1">
    <property type="organism name" value="mouse"/>
</dbReference>
<dbReference type="PRO" id="PR:Q922J9"/>
<dbReference type="Proteomes" id="UP000000589">
    <property type="component" value="Chromosome 7"/>
</dbReference>
<dbReference type="RNAct" id="Q922J9">
    <property type="molecule type" value="protein"/>
</dbReference>
<dbReference type="Bgee" id="ENSMUSG00000030759">
    <property type="expression patterns" value="Expressed in epithelium of stomach and 244 other cell types or tissues"/>
</dbReference>
<dbReference type="ExpressionAtlas" id="Q922J9">
    <property type="expression patterns" value="baseline and differential"/>
</dbReference>
<dbReference type="GO" id="GO:0005778">
    <property type="term" value="C:peroxisomal membrane"/>
    <property type="evidence" value="ECO:0000250"/>
    <property type="project" value="UniProtKB"/>
</dbReference>
<dbReference type="GO" id="GO:0005777">
    <property type="term" value="C:peroxisome"/>
    <property type="evidence" value="ECO:0000314"/>
    <property type="project" value="MGI"/>
</dbReference>
<dbReference type="GO" id="GO:0102965">
    <property type="term" value="F:alcohol-forming long-chain fatty acyl-CoA reductase activity"/>
    <property type="evidence" value="ECO:0007669"/>
    <property type="project" value="UniProtKB-EC"/>
</dbReference>
<dbReference type="GO" id="GO:0080019">
    <property type="term" value="F:alcohol-forming very long-chain fatty acyl-CoA reductase activity"/>
    <property type="evidence" value="ECO:0000314"/>
    <property type="project" value="MGI"/>
</dbReference>
<dbReference type="GO" id="GO:0008611">
    <property type="term" value="P:ether lipid biosynthetic process"/>
    <property type="evidence" value="ECO:0000250"/>
    <property type="project" value="UniProtKB"/>
</dbReference>
<dbReference type="GO" id="GO:0046474">
    <property type="term" value="P:glycerophospholipid biosynthetic process"/>
    <property type="evidence" value="ECO:0007669"/>
    <property type="project" value="Ensembl"/>
</dbReference>
<dbReference type="GO" id="GO:0035336">
    <property type="term" value="P:long-chain fatty-acyl-CoA metabolic process"/>
    <property type="evidence" value="ECO:0007669"/>
    <property type="project" value="Ensembl"/>
</dbReference>
<dbReference type="GO" id="GO:0010025">
    <property type="term" value="P:wax biosynthetic process"/>
    <property type="evidence" value="ECO:0000314"/>
    <property type="project" value="UniProtKB"/>
</dbReference>
<dbReference type="CDD" id="cd05236">
    <property type="entry name" value="FAR-N_SDR_e"/>
    <property type="match status" value="1"/>
</dbReference>
<dbReference type="CDD" id="cd09071">
    <property type="entry name" value="FAR_C"/>
    <property type="match status" value="1"/>
</dbReference>
<dbReference type="FunFam" id="3.40.50.720:FF:000123">
    <property type="entry name" value="Fatty acyl-CoA reductase"/>
    <property type="match status" value="1"/>
</dbReference>
<dbReference type="Gene3D" id="3.40.50.720">
    <property type="entry name" value="NAD(P)-binding Rossmann-like Domain"/>
    <property type="match status" value="1"/>
</dbReference>
<dbReference type="InterPro" id="IPR026055">
    <property type="entry name" value="FAR"/>
</dbReference>
<dbReference type="InterPro" id="IPR033640">
    <property type="entry name" value="FAR_C"/>
</dbReference>
<dbReference type="InterPro" id="IPR013120">
    <property type="entry name" value="Far_NAD-bd"/>
</dbReference>
<dbReference type="InterPro" id="IPR036291">
    <property type="entry name" value="NAD(P)-bd_dom_sf"/>
</dbReference>
<dbReference type="PANTHER" id="PTHR11011:SF119">
    <property type="entry name" value="FATTY ACYL-COA REDUCTASE 1"/>
    <property type="match status" value="1"/>
</dbReference>
<dbReference type="PANTHER" id="PTHR11011">
    <property type="entry name" value="MALE STERILITY PROTEIN 2-RELATED"/>
    <property type="match status" value="1"/>
</dbReference>
<dbReference type="Pfam" id="PF07993">
    <property type="entry name" value="NAD_binding_4"/>
    <property type="match status" value="1"/>
</dbReference>
<dbReference type="Pfam" id="PF03015">
    <property type="entry name" value="Sterile"/>
    <property type="match status" value="1"/>
</dbReference>
<dbReference type="SUPFAM" id="SSF51735">
    <property type="entry name" value="NAD(P)-binding Rossmann-fold domains"/>
    <property type="match status" value="1"/>
</dbReference>
<name>FACR1_MOUSE</name>
<proteinExistence type="evidence at protein level"/>
<keyword id="KW-0025">Alternative splicing</keyword>
<keyword id="KW-0444">Lipid biosynthesis</keyword>
<keyword id="KW-0443">Lipid metabolism</keyword>
<keyword id="KW-0472">Membrane</keyword>
<keyword id="KW-0521">NADP</keyword>
<keyword id="KW-0560">Oxidoreductase</keyword>
<keyword id="KW-0576">Peroxisome</keyword>
<keyword id="KW-1185">Reference proteome</keyword>
<keyword id="KW-0812">Transmembrane</keyword>
<keyword id="KW-1133">Transmembrane helix</keyword>
<gene>
    <name evidence="9" type="primary">Far1</name>
</gene>
<reference key="1">
    <citation type="journal article" date="2005" name="Science">
        <title>The transcriptional landscape of the mammalian genome.</title>
        <authorList>
            <person name="Carninci P."/>
            <person name="Kasukawa T."/>
            <person name="Katayama S."/>
            <person name="Gough J."/>
            <person name="Frith M.C."/>
            <person name="Maeda N."/>
            <person name="Oyama R."/>
            <person name="Ravasi T."/>
            <person name="Lenhard B."/>
            <person name="Wells C."/>
            <person name="Kodzius R."/>
            <person name="Shimokawa K."/>
            <person name="Bajic V.B."/>
            <person name="Brenner S.E."/>
            <person name="Batalov S."/>
            <person name="Forrest A.R."/>
            <person name="Zavolan M."/>
            <person name="Davis M.J."/>
            <person name="Wilming L.G."/>
            <person name="Aidinis V."/>
            <person name="Allen J.E."/>
            <person name="Ambesi-Impiombato A."/>
            <person name="Apweiler R."/>
            <person name="Aturaliya R.N."/>
            <person name="Bailey T.L."/>
            <person name="Bansal M."/>
            <person name="Baxter L."/>
            <person name="Beisel K.W."/>
            <person name="Bersano T."/>
            <person name="Bono H."/>
            <person name="Chalk A.M."/>
            <person name="Chiu K.P."/>
            <person name="Choudhary V."/>
            <person name="Christoffels A."/>
            <person name="Clutterbuck D.R."/>
            <person name="Crowe M.L."/>
            <person name="Dalla E."/>
            <person name="Dalrymple B.P."/>
            <person name="de Bono B."/>
            <person name="Della Gatta G."/>
            <person name="di Bernardo D."/>
            <person name="Down T."/>
            <person name="Engstrom P."/>
            <person name="Fagiolini M."/>
            <person name="Faulkner G."/>
            <person name="Fletcher C.F."/>
            <person name="Fukushima T."/>
            <person name="Furuno M."/>
            <person name="Futaki S."/>
            <person name="Gariboldi M."/>
            <person name="Georgii-Hemming P."/>
            <person name="Gingeras T.R."/>
            <person name="Gojobori T."/>
            <person name="Green R.E."/>
            <person name="Gustincich S."/>
            <person name="Harbers M."/>
            <person name="Hayashi Y."/>
            <person name="Hensch T.K."/>
            <person name="Hirokawa N."/>
            <person name="Hill D."/>
            <person name="Huminiecki L."/>
            <person name="Iacono M."/>
            <person name="Ikeo K."/>
            <person name="Iwama A."/>
            <person name="Ishikawa T."/>
            <person name="Jakt M."/>
            <person name="Kanapin A."/>
            <person name="Katoh M."/>
            <person name="Kawasawa Y."/>
            <person name="Kelso J."/>
            <person name="Kitamura H."/>
            <person name="Kitano H."/>
            <person name="Kollias G."/>
            <person name="Krishnan S.P."/>
            <person name="Kruger A."/>
            <person name="Kummerfeld S.K."/>
            <person name="Kurochkin I.V."/>
            <person name="Lareau L.F."/>
            <person name="Lazarevic D."/>
            <person name="Lipovich L."/>
            <person name="Liu J."/>
            <person name="Liuni S."/>
            <person name="McWilliam S."/>
            <person name="Madan Babu M."/>
            <person name="Madera M."/>
            <person name="Marchionni L."/>
            <person name="Matsuda H."/>
            <person name="Matsuzawa S."/>
            <person name="Miki H."/>
            <person name="Mignone F."/>
            <person name="Miyake S."/>
            <person name="Morris K."/>
            <person name="Mottagui-Tabar S."/>
            <person name="Mulder N."/>
            <person name="Nakano N."/>
            <person name="Nakauchi H."/>
            <person name="Ng P."/>
            <person name="Nilsson R."/>
            <person name="Nishiguchi S."/>
            <person name="Nishikawa S."/>
            <person name="Nori F."/>
            <person name="Ohara O."/>
            <person name="Okazaki Y."/>
            <person name="Orlando V."/>
            <person name="Pang K.C."/>
            <person name="Pavan W.J."/>
            <person name="Pavesi G."/>
            <person name="Pesole G."/>
            <person name="Petrovsky N."/>
            <person name="Piazza S."/>
            <person name="Reed J."/>
            <person name="Reid J.F."/>
            <person name="Ring B.Z."/>
            <person name="Ringwald M."/>
            <person name="Rost B."/>
            <person name="Ruan Y."/>
            <person name="Salzberg S.L."/>
            <person name="Sandelin A."/>
            <person name="Schneider C."/>
            <person name="Schoenbach C."/>
            <person name="Sekiguchi K."/>
            <person name="Semple C.A."/>
            <person name="Seno S."/>
            <person name="Sessa L."/>
            <person name="Sheng Y."/>
            <person name="Shibata Y."/>
            <person name="Shimada H."/>
            <person name="Shimada K."/>
            <person name="Silva D."/>
            <person name="Sinclair B."/>
            <person name="Sperling S."/>
            <person name="Stupka E."/>
            <person name="Sugiura K."/>
            <person name="Sultana R."/>
            <person name="Takenaka Y."/>
            <person name="Taki K."/>
            <person name="Tammoja K."/>
            <person name="Tan S.L."/>
            <person name="Tang S."/>
            <person name="Taylor M.S."/>
            <person name="Tegner J."/>
            <person name="Teichmann S.A."/>
            <person name="Ueda H.R."/>
            <person name="van Nimwegen E."/>
            <person name="Verardo R."/>
            <person name="Wei C.L."/>
            <person name="Yagi K."/>
            <person name="Yamanishi H."/>
            <person name="Zabarovsky E."/>
            <person name="Zhu S."/>
            <person name="Zimmer A."/>
            <person name="Hide W."/>
            <person name="Bult C."/>
            <person name="Grimmond S.M."/>
            <person name="Teasdale R.D."/>
            <person name="Liu E.T."/>
            <person name="Brusic V."/>
            <person name="Quackenbush J."/>
            <person name="Wahlestedt C."/>
            <person name="Mattick J.S."/>
            <person name="Hume D.A."/>
            <person name="Kai C."/>
            <person name="Sasaki D."/>
            <person name="Tomaru Y."/>
            <person name="Fukuda S."/>
            <person name="Kanamori-Katayama M."/>
            <person name="Suzuki M."/>
            <person name="Aoki J."/>
            <person name="Arakawa T."/>
            <person name="Iida J."/>
            <person name="Imamura K."/>
            <person name="Itoh M."/>
            <person name="Kato T."/>
            <person name="Kawaji H."/>
            <person name="Kawagashira N."/>
            <person name="Kawashima T."/>
            <person name="Kojima M."/>
            <person name="Kondo S."/>
            <person name="Konno H."/>
            <person name="Nakano K."/>
            <person name="Ninomiya N."/>
            <person name="Nishio T."/>
            <person name="Okada M."/>
            <person name="Plessy C."/>
            <person name="Shibata K."/>
            <person name="Shiraki T."/>
            <person name="Suzuki S."/>
            <person name="Tagami M."/>
            <person name="Waki K."/>
            <person name="Watahiki A."/>
            <person name="Okamura-Oho Y."/>
            <person name="Suzuki H."/>
            <person name="Kawai J."/>
            <person name="Hayashizaki Y."/>
        </authorList>
    </citation>
    <scope>NUCLEOTIDE SEQUENCE [LARGE SCALE MRNA] (ISOFORMS 1; 2; 3 AND 4)</scope>
    <source>
        <strain>C57BL/6J</strain>
        <tissue>Cecum</tissue>
        <tissue>Embryo</tissue>
        <tissue>Liver</tissue>
        <tissue>Placenta</tissue>
        <tissue>Testis</tissue>
    </source>
</reference>
<reference key="2">
    <citation type="journal article" date="2004" name="Genome Res.">
        <title>The status, quality, and expansion of the NIH full-length cDNA project: the Mammalian Gene Collection (MGC).</title>
        <authorList>
            <consortium name="The MGC Project Team"/>
        </authorList>
    </citation>
    <scope>NUCLEOTIDE SEQUENCE [LARGE SCALE MRNA] (ISOFORM 1)</scope>
    <source>
        <strain>Czech II</strain>
        <tissue>Mammary tumor</tissue>
    </source>
</reference>
<reference key="3">
    <citation type="journal article" date="2004" name="J. Biol. Chem.">
        <title>Mammalian wax biosynthesis: I. Identification of two fatty acyl-coenzyme A reductases with different substrate specificities and tissue distributions.</title>
        <authorList>
            <person name="Cheng J.B."/>
            <person name="Russell D.W."/>
        </authorList>
    </citation>
    <scope>FUNCTION</scope>
    <scope>CATALYTIC ACTIVITY</scope>
    <scope>BIOPHYSICOCHEMICAL PROPERTIES</scope>
    <scope>SUBCELLULAR LOCATION</scope>
    <scope>TISSUE SPECIFICITY</scope>
</reference>
<reference key="4">
    <citation type="journal article" date="2004" name="J. Biol. Chem.">
        <title>Mammalian wax biosynthesis. II. Expression cloning of wax synthase cDNAs encoding a member of the acyltransferase enzyme family.</title>
        <authorList>
            <person name="Cheng J.B."/>
            <person name="Russell D.W."/>
        </authorList>
    </citation>
    <scope>FUNCTION</scope>
</reference>
<reference key="5">
    <citation type="journal article" date="2010" name="Cell">
        <title>A tissue-specific atlas of mouse protein phosphorylation and expression.</title>
        <authorList>
            <person name="Huttlin E.L."/>
            <person name="Jedrychowski M.P."/>
            <person name="Elias J.E."/>
            <person name="Goswami T."/>
            <person name="Rad R."/>
            <person name="Beausoleil S.A."/>
            <person name="Villen J."/>
            <person name="Haas W."/>
            <person name="Sowa M.E."/>
            <person name="Gygi S.P."/>
        </authorList>
    </citation>
    <scope>IDENTIFICATION BY MASS SPECTROMETRY [LARGE SCALE ANALYSIS]</scope>
    <source>
        <tissue>Kidney</tissue>
        <tissue>Spleen</tissue>
    </source>
</reference>
<organism>
    <name type="scientific">Mus musculus</name>
    <name type="common">Mouse</name>
    <dbReference type="NCBI Taxonomy" id="10090"/>
    <lineage>
        <taxon>Eukaryota</taxon>
        <taxon>Metazoa</taxon>
        <taxon>Chordata</taxon>
        <taxon>Craniata</taxon>
        <taxon>Vertebrata</taxon>
        <taxon>Euteleostomi</taxon>
        <taxon>Mammalia</taxon>
        <taxon>Eutheria</taxon>
        <taxon>Euarchontoglires</taxon>
        <taxon>Glires</taxon>
        <taxon>Rodentia</taxon>
        <taxon>Myomorpha</taxon>
        <taxon>Muroidea</taxon>
        <taxon>Muridae</taxon>
        <taxon>Murinae</taxon>
        <taxon>Mus</taxon>
        <taxon>Mus</taxon>
    </lineage>
</organism>
<evidence type="ECO:0000250" key="1">
    <source>
        <dbReference type="UniProtKB" id="Q8WVX9"/>
    </source>
</evidence>
<evidence type="ECO:0000255" key="2"/>
<evidence type="ECO:0000269" key="3">
    <source>
    </source>
</evidence>
<evidence type="ECO:0000269" key="4">
    <source>
    </source>
</evidence>
<evidence type="ECO:0000303" key="5">
    <source>
    </source>
</evidence>
<evidence type="ECO:0000303" key="6">
    <source>
    </source>
</evidence>
<evidence type="ECO:0000305" key="7"/>
<evidence type="ECO:0000305" key="8">
    <source>
    </source>
</evidence>
<evidence type="ECO:0000312" key="9">
    <source>
        <dbReference type="MGI" id="MGI:1914670"/>
    </source>
</evidence>
<feature type="chain" id="PRO_0000261395" description="Fatty acyl-CoA reductase 1">
    <location>
        <begin position="1"/>
        <end position="515"/>
    </location>
</feature>
<feature type="topological domain" description="Cytoplasmic" evidence="1">
    <location>
        <begin position="1"/>
        <end position="465"/>
    </location>
</feature>
<feature type="transmembrane region" description="Helical" evidence="2">
    <location>
        <begin position="466"/>
        <end position="483"/>
    </location>
</feature>
<feature type="topological domain" description="Peroxisomal" evidence="1">
    <location>
        <begin position="484"/>
        <end position="515"/>
    </location>
</feature>
<feature type="region of interest" description="Necessary and sufficient for PEX19-mediated localization into peroxisome membrane" evidence="1">
    <location>
        <begin position="451"/>
        <end position="507"/>
    </location>
</feature>
<feature type="splice variant" id="VSP_021678" description="In isoform 2." evidence="6">
    <original>GWIDNFNGPSGLFIAAGKG</original>
    <variation>VSSSKLLSSWDSEFQVRTV</variation>
    <location>
        <begin position="242"/>
        <end position="260"/>
    </location>
</feature>
<feature type="splice variant" id="VSP_021679" description="In isoform 2." evidence="6">
    <location>
        <begin position="261"/>
        <end position="515"/>
    </location>
</feature>
<feature type="splice variant" id="VSP_021680" description="In isoform 3." evidence="6">
    <original>EYHVISTFKRNPLEQAFRRPNVNLTSNHLLYHYWIAVSHKAPAFLYDIYLRMTGRSPR</original>
    <variation>GDYLNHSFKMNPLNQVFRHPYVKFCSNNLMLHYWKGVKHTVPALLLDLALRLTGQKPW</variation>
    <location>
        <begin position="319"/>
        <end position="376"/>
    </location>
</feature>
<feature type="splice variant" id="VSP_021681" description="In isoform 4." evidence="6">
    <original>Y</original>
    <variation>RRPRI</variation>
    <location>
        <position position="515"/>
    </location>
</feature>
<feature type="sequence conflict" description="In Ref. 1; BAB24102." evidence="7" ref="1">
    <original>P</original>
    <variation>R</variation>
    <location>
        <position position="35"/>
    </location>
</feature>
<feature type="sequence conflict" description="In Ref. 1; BAB24102." evidence="7" ref="1">
    <original>Y</original>
    <variation>H</variation>
    <location>
        <position position="364"/>
    </location>
</feature>
<comment type="function">
    <text evidence="1 3 4">Catalyzes the reduction of saturated and unsaturated C16 or C18 fatty acyl-CoA to fatty alcohols (PubMed:15220348, PubMed:15220349). It plays an essential role in the production of ether lipids/plasmalogens which synthesis requires fatty alcohols (By similarity). In parallel, it is also required for wax monoesters production since fatty alcohols also constitute a substrate for their synthesis (PubMed:15220349).</text>
</comment>
<comment type="catalytic activity">
    <reaction evidence="3">
        <text>a long-chain fatty acyl-CoA + 2 NADPH + 2 H(+) = a long-chain primary fatty alcohol + 2 NADP(+) + CoA</text>
        <dbReference type="Rhea" id="RHEA:52716"/>
        <dbReference type="ChEBI" id="CHEBI:15378"/>
        <dbReference type="ChEBI" id="CHEBI:57287"/>
        <dbReference type="ChEBI" id="CHEBI:57783"/>
        <dbReference type="ChEBI" id="CHEBI:58349"/>
        <dbReference type="ChEBI" id="CHEBI:77396"/>
        <dbReference type="ChEBI" id="CHEBI:83139"/>
        <dbReference type="EC" id="1.2.1.84"/>
    </reaction>
    <physiologicalReaction direction="left-to-right" evidence="8">
        <dbReference type="Rhea" id="RHEA:52717"/>
    </physiologicalReaction>
</comment>
<comment type="catalytic activity">
    <reaction evidence="3">
        <text>hexadecanoyl-CoA + 2 NADPH + 2 H(+) = hexadecan-1-ol + 2 NADP(+) + CoA</text>
        <dbReference type="Rhea" id="RHEA:36315"/>
        <dbReference type="ChEBI" id="CHEBI:15378"/>
        <dbReference type="ChEBI" id="CHEBI:16125"/>
        <dbReference type="ChEBI" id="CHEBI:57287"/>
        <dbReference type="ChEBI" id="CHEBI:57379"/>
        <dbReference type="ChEBI" id="CHEBI:57783"/>
        <dbReference type="ChEBI" id="CHEBI:58349"/>
        <dbReference type="EC" id="1.2.1.84"/>
    </reaction>
    <physiologicalReaction direction="left-to-right" evidence="8">
        <dbReference type="Rhea" id="RHEA:36316"/>
    </physiologicalReaction>
</comment>
<comment type="catalytic activity">
    <reaction evidence="3">
        <text>octadecanoyl-CoA + 2 NADPH + 2 H(+) = octadecan-1-ol + 2 NADP(+) + CoA</text>
        <dbReference type="Rhea" id="RHEA:36319"/>
        <dbReference type="ChEBI" id="CHEBI:15378"/>
        <dbReference type="ChEBI" id="CHEBI:32154"/>
        <dbReference type="ChEBI" id="CHEBI:57287"/>
        <dbReference type="ChEBI" id="CHEBI:57394"/>
        <dbReference type="ChEBI" id="CHEBI:57783"/>
        <dbReference type="ChEBI" id="CHEBI:58349"/>
        <dbReference type="EC" id="1.2.1.84"/>
    </reaction>
    <physiologicalReaction direction="left-to-right" evidence="8">
        <dbReference type="Rhea" id="RHEA:36320"/>
    </physiologicalReaction>
</comment>
<comment type="catalytic activity">
    <reaction evidence="3">
        <text>(9Z)-octadecenoyl-CoA + 2 NADPH + 2 H(+) = (9Z)-octadecen-1-ol + 2 NADP(+) + CoA</text>
        <dbReference type="Rhea" id="RHEA:36323"/>
        <dbReference type="ChEBI" id="CHEBI:15378"/>
        <dbReference type="ChEBI" id="CHEBI:57287"/>
        <dbReference type="ChEBI" id="CHEBI:57387"/>
        <dbReference type="ChEBI" id="CHEBI:57783"/>
        <dbReference type="ChEBI" id="CHEBI:58349"/>
        <dbReference type="ChEBI" id="CHEBI:73504"/>
    </reaction>
    <physiologicalReaction direction="left-to-right" evidence="8">
        <dbReference type="Rhea" id="RHEA:36324"/>
    </physiologicalReaction>
</comment>
<comment type="catalytic activity">
    <reaction evidence="3">
        <text>(9Z,12Z)-octadecadienoyl-CoA + 2 NADPH + 2 H(+) = (9Z,12Z)-octadecadien-1-ol + 2 NADP(+) + CoA</text>
        <dbReference type="Rhea" id="RHEA:36363"/>
        <dbReference type="ChEBI" id="CHEBI:15378"/>
        <dbReference type="ChEBI" id="CHEBI:57287"/>
        <dbReference type="ChEBI" id="CHEBI:57383"/>
        <dbReference type="ChEBI" id="CHEBI:57783"/>
        <dbReference type="ChEBI" id="CHEBI:58349"/>
        <dbReference type="ChEBI" id="CHEBI:73534"/>
    </reaction>
    <physiologicalReaction direction="left-to-right" evidence="8">
        <dbReference type="Rhea" id="RHEA:36364"/>
    </physiologicalReaction>
</comment>
<comment type="catalytic activity">
    <reaction evidence="1">
        <text>eicosanoyl-CoA + 2 NADPH + 2 H(+) = eicosan-1-ol + 2 NADP(+) + CoA</text>
        <dbReference type="Rhea" id="RHEA:81727"/>
        <dbReference type="ChEBI" id="CHEBI:15378"/>
        <dbReference type="ChEBI" id="CHEBI:57287"/>
        <dbReference type="ChEBI" id="CHEBI:57380"/>
        <dbReference type="ChEBI" id="CHEBI:57783"/>
        <dbReference type="ChEBI" id="CHEBI:58349"/>
        <dbReference type="ChEBI" id="CHEBI:75627"/>
    </reaction>
    <physiologicalReaction direction="left-to-right" evidence="1">
        <dbReference type="Rhea" id="RHEA:81728"/>
    </physiologicalReaction>
</comment>
<comment type="catalytic activity">
    <reaction evidence="1">
        <text>16-methylheptadecanoyl-CoA + 2 NADPH + 2 H(+) = 16-methylheptadecan-1-ol + 2 NADP(+) + CoA</text>
        <dbReference type="Rhea" id="RHEA:81763"/>
        <dbReference type="ChEBI" id="CHEBI:15378"/>
        <dbReference type="ChEBI" id="CHEBI:57287"/>
        <dbReference type="ChEBI" id="CHEBI:57783"/>
        <dbReference type="ChEBI" id="CHEBI:58349"/>
        <dbReference type="ChEBI" id="CHEBI:84911"/>
        <dbReference type="ChEBI" id="CHEBI:231998"/>
    </reaction>
    <physiologicalReaction direction="left-to-right" evidence="1">
        <dbReference type="Rhea" id="RHEA:81764"/>
    </physiologicalReaction>
</comment>
<comment type="catalytic activity">
    <reaction evidence="1">
        <text>18-methylnonadecanoyl-CoA + 2 NADPH + 2 H(+) = 18-methylnonadecan-1-ol + 2 NADP(+) + CoA</text>
        <dbReference type="Rhea" id="RHEA:81767"/>
        <dbReference type="ChEBI" id="CHEBI:15378"/>
        <dbReference type="ChEBI" id="CHEBI:57287"/>
        <dbReference type="ChEBI" id="CHEBI:57783"/>
        <dbReference type="ChEBI" id="CHEBI:58349"/>
        <dbReference type="ChEBI" id="CHEBI:84914"/>
        <dbReference type="ChEBI" id="CHEBI:231999"/>
    </reaction>
    <physiologicalReaction direction="left-to-right" evidence="1">
        <dbReference type="Rhea" id="RHEA:81768"/>
    </physiologicalReaction>
</comment>
<comment type="biophysicochemical properties">
    <phDependence>
        <text evidence="3">Optimum pH is 7.4.</text>
    </phDependence>
</comment>
<comment type="subunit">
    <text evidence="1">Interacts with PEX19; PEX19 mediates the targeting of FAR1 to peroxisomes.</text>
</comment>
<comment type="subcellular location">
    <subcellularLocation>
        <location evidence="3">Peroxisome membrane</location>
        <topology evidence="1">Single-pass membrane protein</topology>
    </subcellularLocation>
</comment>
<comment type="alternative products">
    <event type="alternative splicing"/>
    <isoform>
        <id>Q922J9-1</id>
        <name>1</name>
        <sequence type="displayed"/>
    </isoform>
    <isoform>
        <id>Q922J9-2</id>
        <name>2</name>
        <sequence type="described" ref="VSP_021678 VSP_021679"/>
    </isoform>
    <isoform>
        <id>Q922J9-3</id>
        <name>3</name>
        <sequence type="described" ref="VSP_021680"/>
    </isoform>
    <isoform>
        <id>Q922J9-4</id>
        <name>4</name>
        <sequence type="described" ref="VSP_021681"/>
    </isoform>
</comment>
<comment type="tissue specificity">
    <text evidence="3">Widely expressed. Expressed in all tissues examined. Highest expression seen in preputial gland. Expressed in the brain where large quantities of ether lipids are synthesized.</text>
</comment>
<comment type="similarity">
    <text evidence="7">Belongs to the fatty acyl-CoA reductase family.</text>
</comment>
<protein>
    <recommendedName>
        <fullName evidence="5">Fatty acyl-CoA reductase 1</fullName>
        <shortName>Far1</shortName>
        <ecNumber evidence="3">1.2.1.84</ecNumber>
    </recommendedName>
</protein>
<accession>Q922J9</accession>
<accession>Q8BZS2</accession>
<accession>Q9CXE8</accession>
<accession>Q9D0Q1</accession>
<accession>Q9DAU2</accession>